<comment type="function">
    <text evidence="1 4 8 9">C-8 sterol isomerase; part of the third module of ergosterol biosynthesis pathway that includes by the late steps of the pathway (PubMed:18310029). Erg2 catalyzes the reaction which results in unsaturation at C-7 in the B ring of sterols and thus converts fecosterol to episterol (By similarity). The third module or late pathway involves the ergosterol synthesis itself through consecutive reactions that mainly occur in the endoplasmic reticulum (ER) membrane. Firstly, the squalene synthase erg9 catalyzes the condensation of 2 farnesyl pyrophosphate moieties to form squalene, which is the precursor of all steroids. Secondly, squalene is converted into lanosterol by the consecutive action of the squalene epoxidase erg1 and the lanosterol synthase erg7. The lanosterol 14-alpha-demethylase erg11/cyp1 catalyzes C14-demethylation of lanosterol to produce 4,4'-dimethyl cholesta-8,14,24-triene-3-beta-ol. In the next steps, a complex process involving various demethylation, reduction and desaturation reactions catalyzed by the C-14 reductase erg24 and the C-4 demethylation complex erg25-erg26-erg27 leads to the production of zymosterol. Erg28 likely functions in the C-4 demethylation complex reaction by tethering erg26 and Erg27 to the endoplasmic reticulum or to facilitate interaction between these proteins. Then, the sterol 24-C-methyltransferase erg6 catalyzes the methyl transfer from S-adenosyl-methionine to the C-24 of zymosterol to form fecosterol. The C-8 sterol isomerase erg2 catalyzes the reaction which results in unsaturation at C-7 in the B ring of sterols and thus converts fecosterol to episterol. The sterol-C5-desaturases erg31 and erg32 then catalyze the introduction of a C-5 double bond in the B ring to produce 5-dehydroepisterol. The C-22 sterol desaturase erg5 further converts 5-dehydroepisterol into ergosta-5,7,22,24(28)-tetraen-3beta-ol by forming the C-22(23) double bond in the sterol side chain. Finally, ergosta-5,7,22,24(28)-tetraen-3beta-ol is substrate of the C-24(28) sterol reductase erg4 to produce ergosterol (Probable) (PubMed:18310029). In the genus Schizosaccharomyces, a second route exists between lanosterol and fecosterol, via the methylation of lanosterol to eburicol by erg6, followed by C14-demethylation by erg11/cyp1 and C4-demethylation by the demethylation complex erg25-erg26-erg27 (Probable) (PubMed:8586261).</text>
</comment>
<comment type="catalytic activity">
    <reaction evidence="8">
        <text>fecosterol = episterol</text>
        <dbReference type="Rhea" id="RHEA:33435"/>
        <dbReference type="ChEBI" id="CHEBI:17038"/>
        <dbReference type="ChEBI" id="CHEBI:23929"/>
    </reaction>
    <physiologicalReaction direction="left-to-right" evidence="8">
        <dbReference type="Rhea" id="RHEA:33436"/>
    </physiologicalReaction>
</comment>
<comment type="pathway">
    <text evidence="4">Steroid metabolism; ergosterol biosynthesis.</text>
</comment>
<comment type="subcellular location">
    <subcellularLocation>
        <location evidence="3">Endoplasmic reticulum membrane</location>
        <topology evidence="3">Single-pass membrane protein</topology>
    </subcellularLocation>
</comment>
<comment type="disruption phenotype">
    <text evidence="4">Abolishes the production of ergosterol and leads to the formation of more than one septum in some cells (PubMed:18310029). Leads to susceptibility to cycloheximide and to staurosporine, but does not affect tolerance to nystatin and to amphotericin B (PubMed:18310029).</text>
</comment>
<comment type="miscellaneous">
    <text evidence="5">In Aspergillus, the biosynthesis pathway of the sterol precursors leading to the prevalent sterol ergosterol differs from yeast. The ringsystem of lanosterol in S.cerevisiae is firstly demethylised in three enzymatic steps leading to the intermediate zymosterol and secondly a methyl group is added to zymosterol by the sterol 24-C-methyltransferase to form fecosterol. In Aspergillus, lanosterol is firstly transmethylated by the sterol 24-C-methyltransferase leading to the intermediate eburicol and secondly demethylated in three steps to form fecosterol. In the genus Schizosaccharomyces, 2 routes exist from lanosterol to erposterol: the classical one via zymosterol and the second one via the formation of eburicol followed by demethylation.</text>
</comment>
<comment type="similarity">
    <text evidence="7">Belongs to the ERG2 family.</text>
</comment>
<protein>
    <recommendedName>
        <fullName evidence="6">C-8 sterol isomerase erg2</fullName>
        <ecNumber evidence="8">5.-.-.-</ecNumber>
    </recommendedName>
    <alternativeName>
        <fullName evidence="7">Delta-8--delta-7 sterol isomerase erg22</fullName>
    </alternativeName>
    <alternativeName>
        <fullName evidence="6">Ergosterol biosynthetic protein 2</fullName>
    </alternativeName>
</protein>
<organism>
    <name type="scientific">Schizosaccharomyces pombe (strain 972 / ATCC 24843)</name>
    <name type="common">Fission yeast</name>
    <dbReference type="NCBI Taxonomy" id="284812"/>
    <lineage>
        <taxon>Eukaryota</taxon>
        <taxon>Fungi</taxon>
        <taxon>Dikarya</taxon>
        <taxon>Ascomycota</taxon>
        <taxon>Taphrinomycotina</taxon>
        <taxon>Schizosaccharomycetes</taxon>
        <taxon>Schizosaccharomycetales</taxon>
        <taxon>Schizosaccharomycetaceae</taxon>
        <taxon>Schizosaccharomyces</taxon>
    </lineage>
</organism>
<accession>P87113</accession>
<dbReference type="EC" id="5.-.-.-" evidence="8"/>
<dbReference type="EMBL" id="CU329670">
    <property type="protein sequence ID" value="CAB08601.1"/>
    <property type="molecule type" value="Genomic_DNA"/>
</dbReference>
<dbReference type="PIR" id="T38129">
    <property type="entry name" value="T38129"/>
</dbReference>
<dbReference type="RefSeq" id="NP_593324.1">
    <property type="nucleotide sequence ID" value="NM_001018755.2"/>
</dbReference>
<dbReference type="SMR" id="P87113"/>
<dbReference type="BioGRID" id="278476">
    <property type="interactions" value="1"/>
</dbReference>
<dbReference type="FunCoup" id="P87113">
    <property type="interactions" value="204"/>
</dbReference>
<dbReference type="STRING" id="284812.P87113"/>
<dbReference type="iPTMnet" id="P87113"/>
<dbReference type="PaxDb" id="4896-SPAC20G8.07c.1"/>
<dbReference type="EnsemblFungi" id="SPAC20G8.07c.1">
    <property type="protein sequence ID" value="SPAC20G8.07c.1:pep"/>
    <property type="gene ID" value="SPAC20G8.07c"/>
</dbReference>
<dbReference type="GeneID" id="2541992"/>
<dbReference type="KEGG" id="spo:2541992"/>
<dbReference type="PomBase" id="SPAC20G8.07c">
    <property type="gene designation" value="erg2"/>
</dbReference>
<dbReference type="VEuPathDB" id="FungiDB:SPAC20G8.07c"/>
<dbReference type="eggNOG" id="KOG4143">
    <property type="taxonomic scope" value="Eukaryota"/>
</dbReference>
<dbReference type="HOGENOM" id="CLU_085469_0_0_1"/>
<dbReference type="InParanoid" id="P87113"/>
<dbReference type="OMA" id="AMYVIHA"/>
<dbReference type="PhylomeDB" id="P87113"/>
<dbReference type="UniPathway" id="UPA00768"/>
<dbReference type="PRO" id="PR:P87113"/>
<dbReference type="Proteomes" id="UP000002485">
    <property type="component" value="Chromosome I"/>
</dbReference>
<dbReference type="GO" id="GO:0005783">
    <property type="term" value="C:endoplasmic reticulum"/>
    <property type="evidence" value="ECO:0007005"/>
    <property type="project" value="PomBase"/>
</dbReference>
<dbReference type="GO" id="GO:0005789">
    <property type="term" value="C:endoplasmic reticulum membrane"/>
    <property type="evidence" value="ECO:0007669"/>
    <property type="project" value="UniProtKB-SubCell"/>
</dbReference>
<dbReference type="GO" id="GO:0000247">
    <property type="term" value="F:C-8 sterol isomerase activity"/>
    <property type="evidence" value="ECO:0000250"/>
    <property type="project" value="PomBase"/>
</dbReference>
<dbReference type="GO" id="GO:0006696">
    <property type="term" value="P:ergosterol biosynthetic process"/>
    <property type="evidence" value="ECO:0000315"/>
    <property type="project" value="PomBase"/>
</dbReference>
<dbReference type="InterPro" id="IPR006716">
    <property type="entry name" value="ERG2_sigma1_rcpt-like"/>
</dbReference>
<dbReference type="PANTHER" id="PTHR10868">
    <property type="entry name" value="SIGMA 1-TYPE OPIOID RECEPTOR-RELATED"/>
    <property type="match status" value="1"/>
</dbReference>
<dbReference type="PANTHER" id="PTHR10868:SF1">
    <property type="entry name" value="SIGMA NON-OPIOID INTRACELLULAR RECEPTOR 1"/>
    <property type="match status" value="1"/>
</dbReference>
<dbReference type="Pfam" id="PF04622">
    <property type="entry name" value="ERG2_Sigma1R"/>
    <property type="match status" value="1"/>
</dbReference>
<keyword id="KW-0256">Endoplasmic reticulum</keyword>
<keyword id="KW-0413">Isomerase</keyword>
<keyword id="KW-0444">Lipid biosynthesis</keyword>
<keyword id="KW-0443">Lipid metabolism</keyword>
<keyword id="KW-0472">Membrane</keyword>
<keyword id="KW-1185">Reference proteome</keyword>
<keyword id="KW-0752">Steroid biosynthesis</keyword>
<keyword id="KW-0753">Steroid metabolism</keyword>
<keyword id="KW-0756">Sterol biosynthesis</keyword>
<keyword id="KW-1207">Sterol metabolism</keyword>
<keyword id="KW-0812">Transmembrane</keyword>
<keyword id="KW-1133">Transmembrane helix</keyword>
<name>ERG2_SCHPO</name>
<proteinExistence type="inferred from homology"/>
<evidence type="ECO:0000250" key="1">
    <source>
        <dbReference type="UniProtKB" id="P32352"/>
    </source>
</evidence>
<evidence type="ECO:0000255" key="2"/>
<evidence type="ECO:0000269" key="3">
    <source>
    </source>
</evidence>
<evidence type="ECO:0000269" key="4">
    <source>
    </source>
</evidence>
<evidence type="ECO:0000269" key="5">
    <source>
    </source>
</evidence>
<evidence type="ECO:0000303" key="6">
    <source>
    </source>
</evidence>
<evidence type="ECO:0000305" key="7"/>
<evidence type="ECO:0000305" key="8">
    <source>
    </source>
</evidence>
<evidence type="ECO:0000305" key="9">
    <source>
    </source>
</evidence>
<gene>
    <name evidence="6" type="primary">erg2</name>
    <name type="ORF">SPAC20G8.07c</name>
</gene>
<reference key="1">
    <citation type="journal article" date="2002" name="Nature">
        <title>The genome sequence of Schizosaccharomyces pombe.</title>
        <authorList>
            <person name="Wood V."/>
            <person name="Gwilliam R."/>
            <person name="Rajandream M.A."/>
            <person name="Lyne M.H."/>
            <person name="Lyne R."/>
            <person name="Stewart A."/>
            <person name="Sgouros J.G."/>
            <person name="Peat N."/>
            <person name="Hayles J."/>
            <person name="Baker S.G."/>
            <person name="Basham D."/>
            <person name="Bowman S."/>
            <person name="Brooks K."/>
            <person name="Brown D."/>
            <person name="Brown S."/>
            <person name="Chillingworth T."/>
            <person name="Churcher C.M."/>
            <person name="Collins M."/>
            <person name="Connor R."/>
            <person name="Cronin A."/>
            <person name="Davis P."/>
            <person name="Feltwell T."/>
            <person name="Fraser A."/>
            <person name="Gentles S."/>
            <person name="Goble A."/>
            <person name="Hamlin N."/>
            <person name="Harris D.E."/>
            <person name="Hidalgo J."/>
            <person name="Hodgson G."/>
            <person name="Holroyd S."/>
            <person name="Hornsby T."/>
            <person name="Howarth S."/>
            <person name="Huckle E.J."/>
            <person name="Hunt S."/>
            <person name="Jagels K."/>
            <person name="James K.D."/>
            <person name="Jones L."/>
            <person name="Jones M."/>
            <person name="Leather S."/>
            <person name="McDonald S."/>
            <person name="McLean J."/>
            <person name="Mooney P."/>
            <person name="Moule S."/>
            <person name="Mungall K.L."/>
            <person name="Murphy L.D."/>
            <person name="Niblett D."/>
            <person name="Odell C."/>
            <person name="Oliver K."/>
            <person name="O'Neil S."/>
            <person name="Pearson D."/>
            <person name="Quail M.A."/>
            <person name="Rabbinowitsch E."/>
            <person name="Rutherford K.M."/>
            <person name="Rutter S."/>
            <person name="Saunders D."/>
            <person name="Seeger K."/>
            <person name="Sharp S."/>
            <person name="Skelton J."/>
            <person name="Simmonds M.N."/>
            <person name="Squares R."/>
            <person name="Squares S."/>
            <person name="Stevens K."/>
            <person name="Taylor K."/>
            <person name="Taylor R.G."/>
            <person name="Tivey A."/>
            <person name="Walsh S.V."/>
            <person name="Warren T."/>
            <person name="Whitehead S."/>
            <person name="Woodward J.R."/>
            <person name="Volckaert G."/>
            <person name="Aert R."/>
            <person name="Robben J."/>
            <person name="Grymonprez B."/>
            <person name="Weltjens I."/>
            <person name="Vanstreels E."/>
            <person name="Rieger M."/>
            <person name="Schaefer M."/>
            <person name="Mueller-Auer S."/>
            <person name="Gabel C."/>
            <person name="Fuchs M."/>
            <person name="Duesterhoeft A."/>
            <person name="Fritzc C."/>
            <person name="Holzer E."/>
            <person name="Moestl D."/>
            <person name="Hilbert H."/>
            <person name="Borzym K."/>
            <person name="Langer I."/>
            <person name="Beck A."/>
            <person name="Lehrach H."/>
            <person name="Reinhardt R."/>
            <person name="Pohl T.M."/>
            <person name="Eger P."/>
            <person name="Zimmermann W."/>
            <person name="Wedler H."/>
            <person name="Wambutt R."/>
            <person name="Purnelle B."/>
            <person name="Goffeau A."/>
            <person name="Cadieu E."/>
            <person name="Dreano S."/>
            <person name="Gloux S."/>
            <person name="Lelaure V."/>
            <person name="Mottier S."/>
            <person name="Galibert F."/>
            <person name="Aves S.J."/>
            <person name="Xiang Z."/>
            <person name="Hunt C."/>
            <person name="Moore K."/>
            <person name="Hurst S.M."/>
            <person name="Lucas M."/>
            <person name="Rochet M."/>
            <person name="Gaillardin C."/>
            <person name="Tallada V.A."/>
            <person name="Garzon A."/>
            <person name="Thode G."/>
            <person name="Daga R.R."/>
            <person name="Cruzado L."/>
            <person name="Jimenez J."/>
            <person name="Sanchez M."/>
            <person name="del Rey F."/>
            <person name="Benito J."/>
            <person name="Dominguez A."/>
            <person name="Revuelta J.L."/>
            <person name="Moreno S."/>
            <person name="Armstrong J."/>
            <person name="Forsburg S.L."/>
            <person name="Cerutti L."/>
            <person name="Lowe T."/>
            <person name="McCombie W.R."/>
            <person name="Paulsen I."/>
            <person name="Potashkin J."/>
            <person name="Shpakovski G.V."/>
            <person name="Ussery D."/>
            <person name="Barrell B.G."/>
            <person name="Nurse P."/>
        </authorList>
    </citation>
    <scope>NUCLEOTIDE SEQUENCE [LARGE SCALE GENOMIC DNA]</scope>
    <source>
        <strain>972 / ATCC 24843</strain>
    </source>
</reference>
<reference key="2">
    <citation type="journal article" date="1993" name="Mol. Cell. Biol.">
        <title>Conservation between human and fungal squalene synthetases: similarities in structure, function, and regulation.</title>
        <authorList>
            <person name="Robinson G.W."/>
            <person name="Tsay Y.H."/>
            <person name="Kienzle B.K."/>
            <person name="Smith-Monroy C.A."/>
            <person name="Bishop R.W."/>
        </authorList>
    </citation>
    <scope>FUNCTION</scope>
    <source>
        <strain>972 / ATCC 24843</strain>
    </source>
</reference>
<reference key="3">
    <citation type="journal article" date="1995" name="FEMS Microbiol. Lett.">
        <title>Identification of 24-methylene-24,25-dihydrolanosterol as a precursor of ergosterol in the yeasts Schizosaccharomyces pombe and Schizosaccharomyces octosporus.</title>
        <authorList>
            <person name="Harmouch N."/>
            <person name="Coulon J."/>
            <person name="Bonaly R."/>
        </authorList>
    </citation>
    <scope>FUNCTION</scope>
</reference>
<reference key="4">
    <citation type="journal article" date="2006" name="Nat. Biotechnol.">
        <title>ORFeome cloning and global analysis of protein localization in the fission yeast Schizosaccharomyces pombe.</title>
        <authorList>
            <person name="Matsuyama A."/>
            <person name="Arai R."/>
            <person name="Yashiroda Y."/>
            <person name="Shirai A."/>
            <person name="Kamata A."/>
            <person name="Sekido S."/>
            <person name="Kobayashi Y."/>
            <person name="Hashimoto A."/>
            <person name="Hamamoto M."/>
            <person name="Hiraoka Y."/>
            <person name="Horinouchi S."/>
            <person name="Yoshida M."/>
        </authorList>
    </citation>
    <scope>SUBCELLULAR LOCATION [LARGE SCALE ANALYSIS]</scope>
</reference>
<reference key="5">
    <citation type="journal article" date="2008" name="Microbiology">
        <title>Multiple functions of ergosterol in the fission yeast Schizosaccharomyces pombe.</title>
        <authorList>
            <person name="Iwaki T."/>
            <person name="Iefuji H."/>
            <person name="Hiraga Y."/>
            <person name="Hosomi A."/>
            <person name="Morita T."/>
            <person name="Giga-Hama Y."/>
            <person name="Takegawa K."/>
        </authorList>
    </citation>
    <scope>FUNCTION</scope>
    <scope>DISRUPTION PHENOTYPE</scope>
    <scope>PATHWAY</scope>
</reference>
<sequence length="219" mass="24671">MKLTKFLTVFIPFIAGLIYYIQKYHLRSFYQFDPAKLQELSKQSIALYANDTKALLYDLSDRLVAEYGDLITPVNQDEWVHNNAGGAMGTMFILHASFSEYLIFFGTPIGTEGHSGVHMADDYFTILRGRQLAASANDLEARVYLPGDQHVHPWGHTAQYSMPSGEPCFALELAQGWIVSMLPFGFMDGLFSTIDFGTLYKTVYFTAGRMLKSVLMGKF</sequence>
<feature type="chain" id="PRO_0000087019" description="C-8 sterol isomerase erg2">
    <location>
        <begin position="1"/>
        <end position="219"/>
    </location>
</feature>
<feature type="transmembrane region" description="Helical" evidence="2">
    <location>
        <begin position="1"/>
        <end position="21"/>
    </location>
</feature>